<protein>
    <recommendedName>
        <fullName>SLIT and NTRK-like protein 5</fullName>
    </recommendedName>
</protein>
<keyword id="KW-0025">Alternative splicing</keyword>
<keyword id="KW-0325">Glycoprotein</keyword>
<keyword id="KW-0433">Leucine-rich repeat</keyword>
<keyword id="KW-0472">Membrane</keyword>
<keyword id="KW-1185">Reference proteome</keyword>
<keyword id="KW-0677">Repeat</keyword>
<keyword id="KW-0732">Signal</keyword>
<keyword id="KW-0812">Transmembrane</keyword>
<keyword id="KW-1133">Transmembrane helix</keyword>
<sequence length="957" mass="107165">MHVCCPPVTLEQDLHRKMHSWMLQTLAFAVTSLVLSCAETIDYYGEICDNACPCEEKDGILTVSCENRGIISLSEISPPRFPIYHLLLSGNLLSRLYPNEFVNYTGASILHLGSNVIQDIETGAFHGLRGLRRLHLNNNKLELLRDDTFLGLENLEYLQVDYNYISVIEPNAFGKLHMLQVLILNDNLLSGLPNNLFRFVPLTHLDLRGNRLKLLPYVGLLQHMDKVVELQLEENPWNCSCELISLKDWLDSISYSALVGDVVCETPFRLHGRDLDEVSKQELCPRKLISDYEMRPQTPLSTTGYLHTTPASVNSVATSSSAVYKPPLKPPKGTRQPNKPRVRPTSRQPSKDLGYSNYGPSIAYQTKSPVPLECPTACTCNLQISDLGLNVNCQERKIESIAELQPKPYNPKKMYLTENYITVVRRTDFLEATGLDLLHLGNNRISMIQDRAFGDLGNLRRLYLNGNRIERLSPELFYGLQSLQYLFLQYNLIREIQAGTFDPVPNLQLLFLNNNQLQAMPSGVFSGLTLLRLNLRGNSFTSLPVSGVLDQLTSLIQIDLHDNPWDCTCDVVGMKLWIEQLKVGVLVDEVICKAPKKFAETYMRSIKSELLCPDYSDVVVSTPTPSSIQVPSRTNAATPAVRLNSTGTPAGLGAGTGASSVPLSVLILSLLLVFIMSVFVAAGLFVLVMKRRKKNQSDHTSTNNSDVSSFNMQYSVYGGGGGGGGGHPHAHVHHRGPALPKVKTPAGHVYEYIPHPLGHMCKNPIYRSREGNSVEDYKDLHELKVTYSSNHHLQQQPPPPPQQPQQQPPPQMQMQPGEEERRESHHLRSPAYSVSTIEPREDLLSPVQDADRFYRGILEPDKHCSTTPAGSSLPEYPKFPCSPAAYTFSPNYDLRRPHQYLHPGAGESRLREPVLYSPPGAVFVEPNRNEYLELKAKLNVEPDYLEVLEKQTTFSQF</sequence>
<dbReference type="EMBL" id="AB097574">
    <property type="protein sequence ID" value="BAC67208.1"/>
    <property type="molecule type" value="Genomic_DNA"/>
</dbReference>
<dbReference type="EMBL" id="BC065107">
    <property type="protein sequence ID" value="AAH65107.1"/>
    <property type="molecule type" value="mRNA"/>
</dbReference>
<dbReference type="EMBL" id="AK011457">
    <property type="status" value="NOT_ANNOTATED_CDS"/>
    <property type="molecule type" value="mRNA"/>
</dbReference>
<dbReference type="CCDS" id="CCDS27328.1">
    <molecule id="Q810B7-1"/>
</dbReference>
<dbReference type="RefSeq" id="NP_001365698.1">
    <molecule id="Q810B7-1"/>
    <property type="nucleotide sequence ID" value="NM_001378769.1"/>
</dbReference>
<dbReference type="RefSeq" id="NP_001365699.1">
    <molecule id="Q810B7-1"/>
    <property type="nucleotide sequence ID" value="NM_001378770.1"/>
</dbReference>
<dbReference type="RefSeq" id="NP_942565.1">
    <molecule id="Q810B7-1"/>
    <property type="nucleotide sequence ID" value="NM_198865.1"/>
</dbReference>
<dbReference type="RefSeq" id="XP_006519705.1">
    <property type="nucleotide sequence ID" value="XM_006519642.3"/>
</dbReference>
<dbReference type="RefSeq" id="XP_006519706.1">
    <property type="nucleotide sequence ID" value="XM_006519643.3"/>
</dbReference>
<dbReference type="SMR" id="Q810B7"/>
<dbReference type="BioGRID" id="217460">
    <property type="interactions" value="12"/>
</dbReference>
<dbReference type="FunCoup" id="Q810B7">
    <property type="interactions" value="332"/>
</dbReference>
<dbReference type="STRING" id="10090.ENSMUSP00000041499"/>
<dbReference type="GlyCosmos" id="Q810B7">
    <property type="glycosylation" value="2 sites, No reported glycans"/>
</dbReference>
<dbReference type="GlyGen" id="Q810B7">
    <property type="glycosylation" value="6 sites, 1 O-linked glycan (2 sites)"/>
</dbReference>
<dbReference type="iPTMnet" id="Q810B7"/>
<dbReference type="PhosphoSitePlus" id="Q810B7"/>
<dbReference type="PaxDb" id="10090-ENSMUSP00000041499"/>
<dbReference type="ProteomicsDB" id="258693">
    <molecule id="Q810B7-1"/>
</dbReference>
<dbReference type="ProteomicsDB" id="258694">
    <molecule id="Q810B7-2"/>
</dbReference>
<dbReference type="Antibodypedia" id="2571">
    <property type="antibodies" value="133 antibodies from 28 providers"/>
</dbReference>
<dbReference type="DNASU" id="75409"/>
<dbReference type="Ensembl" id="ENSMUST00000042767.9">
    <molecule id="Q810B7-1"/>
    <property type="protein sequence ID" value="ENSMUSP00000041499.8"/>
    <property type="gene ID" value="ENSMUSG00000033214.11"/>
</dbReference>
<dbReference type="GeneID" id="75409"/>
<dbReference type="KEGG" id="mmu:75409"/>
<dbReference type="UCSC" id="uc011zpr.1">
    <molecule id="Q810B7-1"/>
    <property type="organism name" value="mouse"/>
</dbReference>
<dbReference type="AGR" id="MGI:2679448"/>
<dbReference type="CTD" id="26050"/>
<dbReference type="MGI" id="MGI:2679448">
    <property type="gene designation" value="Slitrk5"/>
</dbReference>
<dbReference type="VEuPathDB" id="HostDB:ENSMUSG00000033214"/>
<dbReference type="eggNOG" id="ENOG502QUVV">
    <property type="taxonomic scope" value="Eukaryota"/>
</dbReference>
<dbReference type="GeneTree" id="ENSGT00940000158453"/>
<dbReference type="HOGENOM" id="CLU_012706_1_0_1"/>
<dbReference type="InParanoid" id="Q810B7"/>
<dbReference type="OMA" id="DIVGMKI"/>
<dbReference type="OrthoDB" id="676979at2759"/>
<dbReference type="PhylomeDB" id="Q810B7"/>
<dbReference type="TreeFam" id="TF326378"/>
<dbReference type="Reactome" id="R-MMU-388844">
    <property type="pathway name" value="Receptor-type tyrosine-protein phosphatases"/>
</dbReference>
<dbReference type="Reactome" id="R-MMU-9013404">
    <property type="pathway name" value="RAC2 GTPase cycle"/>
</dbReference>
<dbReference type="Reactome" id="R-MMU-9013423">
    <property type="pathway name" value="RAC3 GTPase cycle"/>
</dbReference>
<dbReference type="BioGRID-ORCS" id="75409">
    <property type="hits" value="0 hits in 77 CRISPR screens"/>
</dbReference>
<dbReference type="ChiTaRS" id="Slitrk5">
    <property type="organism name" value="mouse"/>
</dbReference>
<dbReference type="PRO" id="PR:Q810B7"/>
<dbReference type="Proteomes" id="UP000000589">
    <property type="component" value="Chromosome 14"/>
</dbReference>
<dbReference type="RNAct" id="Q810B7">
    <property type="molecule type" value="protein"/>
</dbReference>
<dbReference type="Bgee" id="ENSMUSG00000033214">
    <property type="expression patterns" value="Expressed in subiculum and 108 other cell types or tissues"/>
</dbReference>
<dbReference type="ExpressionAtlas" id="Q810B7">
    <property type="expression patterns" value="baseline and differential"/>
</dbReference>
<dbReference type="GO" id="GO:0098978">
    <property type="term" value="C:glutamatergic synapse"/>
    <property type="evidence" value="ECO:0007669"/>
    <property type="project" value="Ensembl"/>
</dbReference>
<dbReference type="GO" id="GO:0016020">
    <property type="term" value="C:membrane"/>
    <property type="evidence" value="ECO:0000250"/>
    <property type="project" value="MGI"/>
</dbReference>
<dbReference type="GO" id="GO:0098839">
    <property type="term" value="C:postsynaptic density membrane"/>
    <property type="evidence" value="ECO:0000314"/>
    <property type="project" value="SynGO"/>
</dbReference>
<dbReference type="GO" id="GO:0043235">
    <property type="term" value="C:receptor complex"/>
    <property type="evidence" value="ECO:0000266"/>
    <property type="project" value="MGI"/>
</dbReference>
<dbReference type="GO" id="GO:0030534">
    <property type="term" value="P:adult behavior"/>
    <property type="evidence" value="ECO:0000315"/>
    <property type="project" value="MGI"/>
</dbReference>
<dbReference type="GO" id="GO:0007409">
    <property type="term" value="P:axonogenesis"/>
    <property type="evidence" value="ECO:0000314"/>
    <property type="project" value="MGI"/>
</dbReference>
<dbReference type="GO" id="GO:0007268">
    <property type="term" value="P:chemical synaptic transmission"/>
    <property type="evidence" value="ECO:0000315"/>
    <property type="project" value="MGI"/>
</dbReference>
<dbReference type="GO" id="GO:0072359">
    <property type="term" value="P:circulatory system development"/>
    <property type="evidence" value="ECO:0000315"/>
    <property type="project" value="MGI"/>
</dbReference>
<dbReference type="GO" id="GO:0048813">
    <property type="term" value="P:dendrite morphogenesis"/>
    <property type="evidence" value="ECO:0000315"/>
    <property type="project" value="MGI"/>
</dbReference>
<dbReference type="GO" id="GO:0007625">
    <property type="term" value="P:grooming behavior"/>
    <property type="evidence" value="ECO:0000315"/>
    <property type="project" value="MGI"/>
</dbReference>
<dbReference type="GO" id="GO:0051965">
    <property type="term" value="P:positive regulation of synapse assembly"/>
    <property type="evidence" value="ECO:0000314"/>
    <property type="project" value="MGI"/>
</dbReference>
<dbReference type="GO" id="GO:0150035">
    <property type="term" value="P:regulation of trans-synaptic signaling by BDNF, modulating synaptic transmission"/>
    <property type="evidence" value="ECO:0000314"/>
    <property type="project" value="SynGO"/>
</dbReference>
<dbReference type="GO" id="GO:0009410">
    <property type="term" value="P:response to xenobiotic stimulus"/>
    <property type="evidence" value="ECO:0000315"/>
    <property type="project" value="MGI"/>
</dbReference>
<dbReference type="GO" id="GO:0043588">
    <property type="term" value="P:skin development"/>
    <property type="evidence" value="ECO:0000315"/>
    <property type="project" value="MGI"/>
</dbReference>
<dbReference type="GO" id="GO:0021756">
    <property type="term" value="P:striatum development"/>
    <property type="evidence" value="ECO:0000315"/>
    <property type="project" value="MGI"/>
</dbReference>
<dbReference type="GO" id="GO:0099560">
    <property type="term" value="P:synaptic membrane adhesion"/>
    <property type="evidence" value="ECO:0007669"/>
    <property type="project" value="Ensembl"/>
</dbReference>
<dbReference type="FunFam" id="3.80.10.10:FF:000001">
    <property type="entry name" value="SLIT and NTRK-like family, member 1"/>
    <property type="match status" value="2"/>
</dbReference>
<dbReference type="Gene3D" id="3.80.10.10">
    <property type="entry name" value="Ribonuclease Inhibitor"/>
    <property type="match status" value="2"/>
</dbReference>
<dbReference type="InterPro" id="IPR000483">
    <property type="entry name" value="Cys-rich_flank_reg_C"/>
</dbReference>
<dbReference type="InterPro" id="IPR001611">
    <property type="entry name" value="Leu-rich_rpt"/>
</dbReference>
<dbReference type="InterPro" id="IPR003591">
    <property type="entry name" value="Leu-rich_rpt_typical-subtyp"/>
</dbReference>
<dbReference type="InterPro" id="IPR032675">
    <property type="entry name" value="LRR_dom_sf"/>
</dbReference>
<dbReference type="PANTHER" id="PTHR45773">
    <property type="entry name" value="SLIT AND NTRK-LIKE PROTEIN 4-RELATED"/>
    <property type="match status" value="1"/>
</dbReference>
<dbReference type="PANTHER" id="PTHR45773:SF5">
    <property type="entry name" value="SLIT AND NTRK-LIKE PROTEIN 5"/>
    <property type="match status" value="1"/>
</dbReference>
<dbReference type="Pfam" id="PF13855">
    <property type="entry name" value="LRR_8"/>
    <property type="match status" value="2"/>
</dbReference>
<dbReference type="SMART" id="SM00369">
    <property type="entry name" value="LRR_TYP"/>
    <property type="match status" value="10"/>
</dbReference>
<dbReference type="SMART" id="SM00082">
    <property type="entry name" value="LRRCT"/>
    <property type="match status" value="2"/>
</dbReference>
<dbReference type="SUPFAM" id="SSF52058">
    <property type="entry name" value="L domain-like"/>
    <property type="match status" value="2"/>
</dbReference>
<dbReference type="PROSITE" id="PS51450">
    <property type="entry name" value="LRR"/>
    <property type="match status" value="11"/>
</dbReference>
<feature type="signal peptide" evidence="2">
    <location>
        <begin position="1"/>
        <end position="40"/>
    </location>
</feature>
<feature type="chain" id="PRO_0000032682" description="SLIT and NTRK-like protein 5" evidence="2">
    <location>
        <begin position="41"/>
        <end position="957"/>
    </location>
</feature>
<feature type="topological domain" description="Extracellular" evidence="2">
    <location>
        <begin position="41"/>
        <end position="664"/>
    </location>
</feature>
<feature type="transmembrane region" description="Helical" evidence="2">
    <location>
        <begin position="665"/>
        <end position="685"/>
    </location>
</feature>
<feature type="topological domain" description="Cytoplasmic" evidence="2">
    <location>
        <begin position="686"/>
        <end position="957"/>
    </location>
</feature>
<feature type="repeat" description="LRR 1">
    <location>
        <begin position="82"/>
        <end position="103"/>
    </location>
</feature>
<feature type="repeat" description="LRR 2">
    <location>
        <begin position="106"/>
        <end position="127"/>
    </location>
</feature>
<feature type="repeat" description="LRR 3">
    <location>
        <begin position="130"/>
        <end position="151"/>
    </location>
</feature>
<feature type="repeat" description="LRR 4">
    <location>
        <begin position="154"/>
        <end position="175"/>
    </location>
</feature>
<feature type="repeat" description="LRR 5">
    <location>
        <begin position="178"/>
        <end position="199"/>
    </location>
</feature>
<feature type="repeat" description="LRR 6">
    <location>
        <begin position="201"/>
        <end position="222"/>
    </location>
</feature>
<feature type="domain" description="LRRCT 1">
    <location>
        <begin position="235"/>
        <end position="286"/>
    </location>
</feature>
<feature type="domain" description="LRRNT">
    <location>
        <begin position="365"/>
        <end position="407"/>
    </location>
</feature>
<feature type="repeat" description="LRR 7">
    <location>
        <begin position="410"/>
        <end position="431"/>
    </location>
</feature>
<feature type="repeat" description="LRR 8">
    <location>
        <begin position="434"/>
        <end position="455"/>
    </location>
</feature>
<feature type="repeat" description="LRR 9">
    <location>
        <begin position="458"/>
        <end position="479"/>
    </location>
</feature>
<feature type="repeat" description="LRR 10">
    <location>
        <begin position="482"/>
        <end position="503"/>
    </location>
</feature>
<feature type="repeat" description="LRR 11">
    <location>
        <begin position="506"/>
        <end position="527"/>
    </location>
</feature>
<feature type="repeat" description="LRR 12">
    <location>
        <begin position="529"/>
        <end position="550"/>
    </location>
</feature>
<feature type="domain" description="LRRCT 2">
    <location>
        <begin position="563"/>
        <end position="614"/>
    </location>
</feature>
<feature type="region of interest" description="Disordered" evidence="3">
    <location>
        <begin position="317"/>
        <end position="358"/>
    </location>
</feature>
<feature type="region of interest" description="Disordered" evidence="3">
    <location>
        <begin position="623"/>
        <end position="642"/>
    </location>
</feature>
<feature type="region of interest" description="Disordered" evidence="3">
    <location>
        <begin position="789"/>
        <end position="844"/>
    </location>
</feature>
<feature type="compositionally biased region" description="Low complexity" evidence="3">
    <location>
        <begin position="623"/>
        <end position="632"/>
    </location>
</feature>
<feature type="compositionally biased region" description="Pro residues" evidence="3">
    <location>
        <begin position="796"/>
        <end position="811"/>
    </location>
</feature>
<feature type="glycosylation site" description="N-linked (GlcNAc...) asparagine" evidence="2">
    <location>
        <position position="103"/>
    </location>
</feature>
<feature type="glycosylation site" description="N-linked (GlcNAc...) asparagine" evidence="2">
    <location>
        <position position="644"/>
    </location>
</feature>
<feature type="splice variant" id="VSP_050708" description="In isoform 2." evidence="5">
    <original>DVSSFNMQYSVYGGGGG</original>
    <variation>AATAPAAAPSADADAAW</variation>
    <location>
        <begin position="706"/>
        <end position="722"/>
    </location>
</feature>
<feature type="splice variant" id="VSP_050709" description="In isoform 2." evidence="5">
    <original>GHPHAHVHHRGPALPKVKTPAGHVYEYIPH</original>
    <variation>EAGKPPFEEPRLQRQHHRAPRGPTVAGAGR</variation>
    <location>
        <begin position="726"/>
        <end position="755"/>
    </location>
</feature>
<feature type="splice variant" id="VSP_050710" description="In isoform 2." evidence="5">
    <location>
        <begin position="756"/>
        <end position="957"/>
    </location>
</feature>
<feature type="sequence conflict" description="In Ref. 2; AAH65107." evidence="6" ref="2">
    <original>E</original>
    <variation>D</variation>
    <location>
        <position position="153"/>
    </location>
</feature>
<accession>Q810B7</accession>
<accession>Q9CT21</accession>
<evidence type="ECO:0000250" key="1"/>
<evidence type="ECO:0000255" key="2"/>
<evidence type="ECO:0000256" key="3">
    <source>
        <dbReference type="SAM" id="MobiDB-lite"/>
    </source>
</evidence>
<evidence type="ECO:0000269" key="4">
    <source>
    </source>
</evidence>
<evidence type="ECO:0000303" key="5">
    <source>
    </source>
</evidence>
<evidence type="ECO:0000305" key="6"/>
<evidence type="ECO:0000312" key="7">
    <source>
        <dbReference type="EMBL" id="AAH65107.1"/>
    </source>
</evidence>
<evidence type="ECO:0000312" key="8">
    <source>
        <dbReference type="EMBL" id="BAC67208.1"/>
    </source>
</evidence>
<proteinExistence type="evidence at transcript level"/>
<comment type="function">
    <text evidence="4">Suppresses neurite outgrowth.</text>
</comment>
<comment type="subcellular location">
    <subcellularLocation>
        <location evidence="1">Membrane</location>
        <topology evidence="1">Single-pass type I membrane protein</topology>
    </subcellularLocation>
</comment>
<comment type="alternative products">
    <event type="alternative splicing"/>
    <isoform>
        <id>Q810B7-1</id>
        <name evidence="4">1</name>
        <sequence type="displayed"/>
    </isoform>
    <isoform>
        <id>Q810B7-2</id>
        <name evidence="6">2</name>
        <sequence type="described" ref="VSP_050708 VSP_050709 VSP_050710"/>
    </isoform>
</comment>
<comment type="tissue specificity">
    <text evidence="4">In the adult, significant expression is detected only in the brain. In the embryo, expressed in the subventricular zone, cortical plate, pyramidal layer of hippocampus, thalamus and hypothalamus.</text>
</comment>
<comment type="similarity">
    <text evidence="6">Belongs to the SLITRK family.</text>
</comment>
<comment type="sequence caution" evidence="6">
    <conflict type="frameshift">
        <sequence resource="EMBL" id="AK011457"/>
    </conflict>
</comment>
<gene>
    <name type="primary">Slitrk5</name>
</gene>
<organism evidence="8">
    <name type="scientific">Mus musculus</name>
    <name type="common">Mouse</name>
    <dbReference type="NCBI Taxonomy" id="10090"/>
    <lineage>
        <taxon>Eukaryota</taxon>
        <taxon>Metazoa</taxon>
        <taxon>Chordata</taxon>
        <taxon>Craniata</taxon>
        <taxon>Vertebrata</taxon>
        <taxon>Euteleostomi</taxon>
        <taxon>Mammalia</taxon>
        <taxon>Eutheria</taxon>
        <taxon>Euarchontoglires</taxon>
        <taxon>Glires</taxon>
        <taxon>Rodentia</taxon>
        <taxon>Myomorpha</taxon>
        <taxon>Muroidea</taxon>
        <taxon>Muridae</taxon>
        <taxon>Murinae</taxon>
        <taxon>Mus</taxon>
        <taxon>Mus</taxon>
    </lineage>
</organism>
<name>SLIK5_MOUSE</name>
<reference evidence="6" key="1">
    <citation type="journal article" date="2003" name="Mol. Cell. Neurosci.">
        <title>Identification and characterization of Slitrk, a novel neuronal transmembrane protein family controlling neurite outgrowth.</title>
        <authorList>
            <person name="Aruga J."/>
            <person name="Mikoshiba K."/>
        </authorList>
    </citation>
    <scope>NUCLEOTIDE SEQUENCE [GENOMIC DNA] (ISOFORM 1)</scope>
    <scope>FUNCTION</scope>
    <scope>TISSUE SPECIFICITY</scope>
</reference>
<reference evidence="6" key="2">
    <citation type="journal article" date="2004" name="Genome Res.">
        <title>The status, quality, and expansion of the NIH full-length cDNA project: the Mammalian Gene Collection (MGC).</title>
        <authorList>
            <consortium name="The MGC Project Team"/>
        </authorList>
    </citation>
    <scope>NUCLEOTIDE SEQUENCE [LARGE SCALE MRNA] (ISOFORM 2)</scope>
    <source>
        <strain evidence="7">C57BL/6J</strain>
        <tissue evidence="7">Brain</tissue>
    </source>
</reference>
<reference key="3">
    <citation type="journal article" date="2005" name="Science">
        <title>The transcriptional landscape of the mammalian genome.</title>
        <authorList>
            <person name="Carninci P."/>
            <person name="Kasukawa T."/>
            <person name="Katayama S."/>
            <person name="Gough J."/>
            <person name="Frith M.C."/>
            <person name="Maeda N."/>
            <person name="Oyama R."/>
            <person name="Ravasi T."/>
            <person name="Lenhard B."/>
            <person name="Wells C."/>
            <person name="Kodzius R."/>
            <person name="Shimokawa K."/>
            <person name="Bajic V.B."/>
            <person name="Brenner S.E."/>
            <person name="Batalov S."/>
            <person name="Forrest A.R."/>
            <person name="Zavolan M."/>
            <person name="Davis M.J."/>
            <person name="Wilming L.G."/>
            <person name="Aidinis V."/>
            <person name="Allen J.E."/>
            <person name="Ambesi-Impiombato A."/>
            <person name="Apweiler R."/>
            <person name="Aturaliya R.N."/>
            <person name="Bailey T.L."/>
            <person name="Bansal M."/>
            <person name="Baxter L."/>
            <person name="Beisel K.W."/>
            <person name="Bersano T."/>
            <person name="Bono H."/>
            <person name="Chalk A.M."/>
            <person name="Chiu K.P."/>
            <person name="Choudhary V."/>
            <person name="Christoffels A."/>
            <person name="Clutterbuck D.R."/>
            <person name="Crowe M.L."/>
            <person name="Dalla E."/>
            <person name="Dalrymple B.P."/>
            <person name="de Bono B."/>
            <person name="Della Gatta G."/>
            <person name="di Bernardo D."/>
            <person name="Down T."/>
            <person name="Engstrom P."/>
            <person name="Fagiolini M."/>
            <person name="Faulkner G."/>
            <person name="Fletcher C.F."/>
            <person name="Fukushima T."/>
            <person name="Furuno M."/>
            <person name="Futaki S."/>
            <person name="Gariboldi M."/>
            <person name="Georgii-Hemming P."/>
            <person name="Gingeras T.R."/>
            <person name="Gojobori T."/>
            <person name="Green R.E."/>
            <person name="Gustincich S."/>
            <person name="Harbers M."/>
            <person name="Hayashi Y."/>
            <person name="Hensch T.K."/>
            <person name="Hirokawa N."/>
            <person name="Hill D."/>
            <person name="Huminiecki L."/>
            <person name="Iacono M."/>
            <person name="Ikeo K."/>
            <person name="Iwama A."/>
            <person name="Ishikawa T."/>
            <person name="Jakt M."/>
            <person name="Kanapin A."/>
            <person name="Katoh M."/>
            <person name="Kawasawa Y."/>
            <person name="Kelso J."/>
            <person name="Kitamura H."/>
            <person name="Kitano H."/>
            <person name="Kollias G."/>
            <person name="Krishnan S.P."/>
            <person name="Kruger A."/>
            <person name="Kummerfeld S.K."/>
            <person name="Kurochkin I.V."/>
            <person name="Lareau L.F."/>
            <person name="Lazarevic D."/>
            <person name="Lipovich L."/>
            <person name="Liu J."/>
            <person name="Liuni S."/>
            <person name="McWilliam S."/>
            <person name="Madan Babu M."/>
            <person name="Madera M."/>
            <person name="Marchionni L."/>
            <person name="Matsuda H."/>
            <person name="Matsuzawa S."/>
            <person name="Miki H."/>
            <person name="Mignone F."/>
            <person name="Miyake S."/>
            <person name="Morris K."/>
            <person name="Mottagui-Tabar S."/>
            <person name="Mulder N."/>
            <person name="Nakano N."/>
            <person name="Nakauchi H."/>
            <person name="Ng P."/>
            <person name="Nilsson R."/>
            <person name="Nishiguchi S."/>
            <person name="Nishikawa S."/>
            <person name="Nori F."/>
            <person name="Ohara O."/>
            <person name="Okazaki Y."/>
            <person name="Orlando V."/>
            <person name="Pang K.C."/>
            <person name="Pavan W.J."/>
            <person name="Pavesi G."/>
            <person name="Pesole G."/>
            <person name="Petrovsky N."/>
            <person name="Piazza S."/>
            <person name="Reed J."/>
            <person name="Reid J.F."/>
            <person name="Ring B.Z."/>
            <person name="Ringwald M."/>
            <person name="Rost B."/>
            <person name="Ruan Y."/>
            <person name="Salzberg S.L."/>
            <person name="Sandelin A."/>
            <person name="Schneider C."/>
            <person name="Schoenbach C."/>
            <person name="Sekiguchi K."/>
            <person name="Semple C.A."/>
            <person name="Seno S."/>
            <person name="Sessa L."/>
            <person name="Sheng Y."/>
            <person name="Shibata Y."/>
            <person name="Shimada H."/>
            <person name="Shimada K."/>
            <person name="Silva D."/>
            <person name="Sinclair B."/>
            <person name="Sperling S."/>
            <person name="Stupka E."/>
            <person name="Sugiura K."/>
            <person name="Sultana R."/>
            <person name="Takenaka Y."/>
            <person name="Taki K."/>
            <person name="Tammoja K."/>
            <person name="Tan S.L."/>
            <person name="Tang S."/>
            <person name="Taylor M.S."/>
            <person name="Tegner J."/>
            <person name="Teichmann S.A."/>
            <person name="Ueda H.R."/>
            <person name="van Nimwegen E."/>
            <person name="Verardo R."/>
            <person name="Wei C.L."/>
            <person name="Yagi K."/>
            <person name="Yamanishi H."/>
            <person name="Zabarovsky E."/>
            <person name="Zhu S."/>
            <person name="Zimmer A."/>
            <person name="Hide W."/>
            <person name="Bult C."/>
            <person name="Grimmond S.M."/>
            <person name="Teasdale R.D."/>
            <person name="Liu E.T."/>
            <person name="Brusic V."/>
            <person name="Quackenbush J."/>
            <person name="Wahlestedt C."/>
            <person name="Mattick J.S."/>
            <person name="Hume D.A."/>
            <person name="Kai C."/>
            <person name="Sasaki D."/>
            <person name="Tomaru Y."/>
            <person name="Fukuda S."/>
            <person name="Kanamori-Katayama M."/>
            <person name="Suzuki M."/>
            <person name="Aoki J."/>
            <person name="Arakawa T."/>
            <person name="Iida J."/>
            <person name="Imamura K."/>
            <person name="Itoh M."/>
            <person name="Kato T."/>
            <person name="Kawaji H."/>
            <person name="Kawagashira N."/>
            <person name="Kawashima T."/>
            <person name="Kojima M."/>
            <person name="Kondo S."/>
            <person name="Konno H."/>
            <person name="Nakano K."/>
            <person name="Ninomiya N."/>
            <person name="Nishio T."/>
            <person name="Okada M."/>
            <person name="Plessy C."/>
            <person name="Shibata K."/>
            <person name="Shiraki T."/>
            <person name="Suzuki S."/>
            <person name="Tagami M."/>
            <person name="Waki K."/>
            <person name="Watahiki A."/>
            <person name="Okamura-Oho Y."/>
            <person name="Suzuki H."/>
            <person name="Kawai J."/>
            <person name="Hayashizaki Y."/>
        </authorList>
    </citation>
    <scope>NUCLEOTIDE SEQUENCE [LARGE SCALE MRNA] OF 830-957 (ISOFORM 1)</scope>
    <source>
        <strain>C57BL/6J</strain>
        <tissue>Embryo</tissue>
    </source>
</reference>